<proteinExistence type="inferred from homology"/>
<organism>
    <name type="scientific">Serratia proteamaculans (strain 568)</name>
    <dbReference type="NCBI Taxonomy" id="399741"/>
    <lineage>
        <taxon>Bacteria</taxon>
        <taxon>Pseudomonadati</taxon>
        <taxon>Pseudomonadota</taxon>
        <taxon>Gammaproteobacteria</taxon>
        <taxon>Enterobacterales</taxon>
        <taxon>Yersiniaceae</taxon>
        <taxon>Serratia</taxon>
    </lineage>
</organism>
<name>RL27_SERP5</name>
<feature type="chain" id="PRO_1000061051" description="Large ribosomal subunit protein bL27">
    <location>
        <begin position="1"/>
        <end position="85"/>
    </location>
</feature>
<feature type="region of interest" description="Disordered" evidence="2">
    <location>
        <begin position="1"/>
        <end position="20"/>
    </location>
</feature>
<gene>
    <name evidence="1" type="primary">rpmA</name>
    <name type="ordered locus">Spro_0474</name>
</gene>
<sequence>MAHKKAGGSTRNGRDSEAKRLGVKRFGGEAVLAGSIIVRQRGTKFHAGTNVGCGKDHTLFALKDGKVKFEVKGPSNRKFISIEAE</sequence>
<evidence type="ECO:0000255" key="1">
    <source>
        <dbReference type="HAMAP-Rule" id="MF_00539"/>
    </source>
</evidence>
<evidence type="ECO:0000256" key="2">
    <source>
        <dbReference type="SAM" id="MobiDB-lite"/>
    </source>
</evidence>
<evidence type="ECO:0000305" key="3"/>
<accession>A8G8Z2</accession>
<protein>
    <recommendedName>
        <fullName evidence="1">Large ribosomal subunit protein bL27</fullName>
    </recommendedName>
    <alternativeName>
        <fullName evidence="3">50S ribosomal protein L27</fullName>
    </alternativeName>
</protein>
<reference key="1">
    <citation type="submission" date="2007-09" db="EMBL/GenBank/DDBJ databases">
        <title>Complete sequence of chromosome of Serratia proteamaculans 568.</title>
        <authorList>
            <consortium name="US DOE Joint Genome Institute"/>
            <person name="Copeland A."/>
            <person name="Lucas S."/>
            <person name="Lapidus A."/>
            <person name="Barry K."/>
            <person name="Glavina del Rio T."/>
            <person name="Dalin E."/>
            <person name="Tice H."/>
            <person name="Pitluck S."/>
            <person name="Chain P."/>
            <person name="Malfatti S."/>
            <person name="Shin M."/>
            <person name="Vergez L."/>
            <person name="Schmutz J."/>
            <person name="Larimer F."/>
            <person name="Land M."/>
            <person name="Hauser L."/>
            <person name="Kyrpides N."/>
            <person name="Kim E."/>
            <person name="Taghavi S."/>
            <person name="Newman L."/>
            <person name="Vangronsveld J."/>
            <person name="van der Lelie D."/>
            <person name="Richardson P."/>
        </authorList>
    </citation>
    <scope>NUCLEOTIDE SEQUENCE [LARGE SCALE GENOMIC DNA]</scope>
    <source>
        <strain>568</strain>
    </source>
</reference>
<keyword id="KW-0687">Ribonucleoprotein</keyword>
<keyword id="KW-0689">Ribosomal protein</keyword>
<comment type="similarity">
    <text evidence="1">Belongs to the bacterial ribosomal protein bL27 family.</text>
</comment>
<dbReference type="EMBL" id="CP000826">
    <property type="protein sequence ID" value="ABV39582.1"/>
    <property type="molecule type" value="Genomic_DNA"/>
</dbReference>
<dbReference type="SMR" id="A8G8Z2"/>
<dbReference type="STRING" id="399741.Spro_0474"/>
<dbReference type="KEGG" id="spe:Spro_0474"/>
<dbReference type="eggNOG" id="COG0211">
    <property type="taxonomic scope" value="Bacteria"/>
</dbReference>
<dbReference type="HOGENOM" id="CLU_095424_4_1_6"/>
<dbReference type="OrthoDB" id="9803474at2"/>
<dbReference type="GO" id="GO:0022625">
    <property type="term" value="C:cytosolic large ribosomal subunit"/>
    <property type="evidence" value="ECO:0007669"/>
    <property type="project" value="TreeGrafter"/>
</dbReference>
<dbReference type="GO" id="GO:0003735">
    <property type="term" value="F:structural constituent of ribosome"/>
    <property type="evidence" value="ECO:0007669"/>
    <property type="project" value="InterPro"/>
</dbReference>
<dbReference type="GO" id="GO:0006412">
    <property type="term" value="P:translation"/>
    <property type="evidence" value="ECO:0007669"/>
    <property type="project" value="UniProtKB-UniRule"/>
</dbReference>
<dbReference type="FunFam" id="2.40.50.100:FF:000001">
    <property type="entry name" value="50S ribosomal protein L27"/>
    <property type="match status" value="1"/>
</dbReference>
<dbReference type="Gene3D" id="2.40.50.100">
    <property type="match status" value="1"/>
</dbReference>
<dbReference type="HAMAP" id="MF_00539">
    <property type="entry name" value="Ribosomal_bL27"/>
    <property type="match status" value="1"/>
</dbReference>
<dbReference type="InterPro" id="IPR001684">
    <property type="entry name" value="Ribosomal_bL27"/>
</dbReference>
<dbReference type="InterPro" id="IPR018261">
    <property type="entry name" value="Ribosomal_bL27_CS"/>
</dbReference>
<dbReference type="NCBIfam" id="TIGR00062">
    <property type="entry name" value="L27"/>
    <property type="match status" value="1"/>
</dbReference>
<dbReference type="PANTHER" id="PTHR15893:SF0">
    <property type="entry name" value="LARGE RIBOSOMAL SUBUNIT PROTEIN BL27M"/>
    <property type="match status" value="1"/>
</dbReference>
<dbReference type="PANTHER" id="PTHR15893">
    <property type="entry name" value="RIBOSOMAL PROTEIN L27"/>
    <property type="match status" value="1"/>
</dbReference>
<dbReference type="Pfam" id="PF01016">
    <property type="entry name" value="Ribosomal_L27"/>
    <property type="match status" value="1"/>
</dbReference>
<dbReference type="PRINTS" id="PR00063">
    <property type="entry name" value="RIBOSOMALL27"/>
</dbReference>
<dbReference type="SUPFAM" id="SSF110324">
    <property type="entry name" value="Ribosomal L27 protein-like"/>
    <property type="match status" value="1"/>
</dbReference>
<dbReference type="PROSITE" id="PS00831">
    <property type="entry name" value="RIBOSOMAL_L27"/>
    <property type="match status" value="1"/>
</dbReference>